<comment type="similarity">
    <text evidence="1">Belongs to the UPF0260 family.</text>
</comment>
<accession>Q8FZK4</accession>
<accession>G0KBN5</accession>
<sequence>MTDKPFWQTKNLNQLTRSEWESLCDGCGQCCLHKLQDEDTDEIYWTSVACTLLNPETCQCRDYPNRKKTVPDCVFLTPEIVDEVDWLPVTCAYRLVAEGSDLYWWHPLVSGSPETVHEAGISVRGKVTAFDHDMQDDDDYLDHMVTPDKIAR</sequence>
<reference key="1">
    <citation type="journal article" date="2002" name="Proc. Natl. Acad. Sci. U.S.A.">
        <title>The Brucella suis genome reveals fundamental similarities between animal and plant pathogens and symbionts.</title>
        <authorList>
            <person name="Paulsen I.T."/>
            <person name="Seshadri R."/>
            <person name="Nelson K.E."/>
            <person name="Eisen J.A."/>
            <person name="Heidelberg J.F."/>
            <person name="Read T.D."/>
            <person name="Dodson R.J."/>
            <person name="Umayam L.A."/>
            <person name="Brinkac L.M."/>
            <person name="Beanan M.J."/>
            <person name="Daugherty S.C."/>
            <person name="DeBoy R.T."/>
            <person name="Durkin A.S."/>
            <person name="Kolonay J.F."/>
            <person name="Madupu R."/>
            <person name="Nelson W.C."/>
            <person name="Ayodeji B."/>
            <person name="Kraul M."/>
            <person name="Shetty J."/>
            <person name="Malek J.A."/>
            <person name="Van Aken S.E."/>
            <person name="Riedmuller S."/>
            <person name="Tettelin H."/>
            <person name="Gill S.R."/>
            <person name="White O."/>
            <person name="Salzberg S.L."/>
            <person name="Hoover D.L."/>
            <person name="Lindler L.E."/>
            <person name="Halling S.M."/>
            <person name="Boyle S.M."/>
            <person name="Fraser C.M."/>
        </authorList>
    </citation>
    <scope>NUCLEOTIDE SEQUENCE [LARGE SCALE GENOMIC DNA]</scope>
    <source>
        <strain>1330</strain>
    </source>
</reference>
<reference key="2">
    <citation type="journal article" date="2011" name="J. Bacteriol.">
        <title>Revised genome sequence of Brucella suis 1330.</title>
        <authorList>
            <person name="Tae H."/>
            <person name="Shallom S."/>
            <person name="Settlage R."/>
            <person name="Preston D."/>
            <person name="Adams L.G."/>
            <person name="Garner H.R."/>
        </authorList>
    </citation>
    <scope>NUCLEOTIDE SEQUENCE [LARGE SCALE GENOMIC DNA]</scope>
    <source>
        <strain>1330</strain>
    </source>
</reference>
<evidence type="ECO:0000255" key="1">
    <source>
        <dbReference type="HAMAP-Rule" id="MF_00676"/>
    </source>
</evidence>
<organism>
    <name type="scientific">Brucella suis biovar 1 (strain 1330)</name>
    <dbReference type="NCBI Taxonomy" id="204722"/>
    <lineage>
        <taxon>Bacteria</taxon>
        <taxon>Pseudomonadati</taxon>
        <taxon>Pseudomonadota</taxon>
        <taxon>Alphaproteobacteria</taxon>
        <taxon>Hyphomicrobiales</taxon>
        <taxon>Brucellaceae</taxon>
        <taxon>Brucella/Ochrobactrum group</taxon>
        <taxon>Brucella</taxon>
    </lineage>
</organism>
<feature type="chain" id="PRO_0000214577" description="UPF0260 protein BR1477/BS1330_I1471">
    <location>
        <begin position="1"/>
        <end position="152"/>
    </location>
</feature>
<proteinExistence type="inferred from homology"/>
<dbReference type="EMBL" id="AE014291">
    <property type="protein sequence ID" value="AAN30388.1"/>
    <property type="molecule type" value="Genomic_DNA"/>
</dbReference>
<dbReference type="EMBL" id="CP002997">
    <property type="protein sequence ID" value="AEM18804.1"/>
    <property type="molecule type" value="Genomic_DNA"/>
</dbReference>
<dbReference type="RefSeq" id="WP_004688573.1">
    <property type="nucleotide sequence ID" value="NZ_KN046804.1"/>
</dbReference>
<dbReference type="KEGG" id="bms:BR1477"/>
<dbReference type="KEGG" id="bsi:BS1330_I1471"/>
<dbReference type="PATRIC" id="fig|204722.21.peg.3584"/>
<dbReference type="HOGENOM" id="CLU_109769_0_1_5"/>
<dbReference type="PhylomeDB" id="Q8FZK4"/>
<dbReference type="Proteomes" id="UP000007104">
    <property type="component" value="Chromosome I"/>
</dbReference>
<dbReference type="HAMAP" id="MF_00676">
    <property type="entry name" value="UPF0260"/>
    <property type="match status" value="1"/>
</dbReference>
<dbReference type="InterPro" id="IPR005358">
    <property type="entry name" value="Puta_zinc/iron-chelating_dom"/>
</dbReference>
<dbReference type="InterPro" id="IPR008228">
    <property type="entry name" value="UCP006173"/>
</dbReference>
<dbReference type="NCBIfam" id="NF003501">
    <property type="entry name" value="PRK05170.1-5"/>
    <property type="match status" value="1"/>
</dbReference>
<dbReference type="NCBIfam" id="NF003507">
    <property type="entry name" value="PRK05170.2-5"/>
    <property type="match status" value="1"/>
</dbReference>
<dbReference type="PANTHER" id="PTHR37421">
    <property type="entry name" value="UPF0260 PROTEIN YCGN"/>
    <property type="match status" value="1"/>
</dbReference>
<dbReference type="PANTHER" id="PTHR37421:SF1">
    <property type="entry name" value="UPF0260 PROTEIN YCGN"/>
    <property type="match status" value="1"/>
</dbReference>
<dbReference type="Pfam" id="PF03692">
    <property type="entry name" value="CxxCxxCC"/>
    <property type="match status" value="1"/>
</dbReference>
<dbReference type="PIRSF" id="PIRSF006173">
    <property type="entry name" value="UCP006173"/>
    <property type="match status" value="1"/>
</dbReference>
<gene>
    <name type="ordered locus">BR1477</name>
    <name type="ordered locus">BS1330_I1471</name>
</gene>
<name>Y1477_BRUSU</name>
<protein>
    <recommendedName>
        <fullName evidence="1">UPF0260 protein BR1477/BS1330_I1471</fullName>
    </recommendedName>
</protein>